<evidence type="ECO:0000255" key="1">
    <source>
        <dbReference type="HAMAP-Rule" id="MF_01342"/>
    </source>
</evidence>
<evidence type="ECO:0000305" key="2"/>
<organism>
    <name type="scientific">Buchnera aphidicola subsp. Acyrthosiphon pisum (strain 5A)</name>
    <dbReference type="NCBI Taxonomy" id="563178"/>
    <lineage>
        <taxon>Bacteria</taxon>
        <taxon>Pseudomonadati</taxon>
        <taxon>Pseudomonadota</taxon>
        <taxon>Gammaproteobacteria</taxon>
        <taxon>Enterobacterales</taxon>
        <taxon>Erwiniaceae</taxon>
        <taxon>Buchnera</taxon>
    </lineage>
</organism>
<reference key="1">
    <citation type="journal article" date="2009" name="Science">
        <title>The dynamics and time scale of ongoing genomic erosion in symbiotic bacteria.</title>
        <authorList>
            <person name="Moran N.A."/>
            <person name="McLaughlin H.J."/>
            <person name="Sorek R."/>
        </authorList>
    </citation>
    <scope>NUCLEOTIDE SEQUENCE [LARGE SCALE GENOMIC DNA]</scope>
    <source>
        <strain>5A</strain>
    </source>
</reference>
<dbReference type="EMBL" id="CP001161">
    <property type="protein sequence ID" value="ACL30861.1"/>
    <property type="molecule type" value="Genomic_DNA"/>
</dbReference>
<dbReference type="RefSeq" id="WP_009874468.1">
    <property type="nucleotide sequence ID" value="NC_011833.1"/>
</dbReference>
<dbReference type="SMR" id="B8D9U0"/>
<dbReference type="KEGG" id="bap:BUAP5A_510"/>
<dbReference type="HOGENOM" id="CLU_078858_2_1_6"/>
<dbReference type="OrthoDB" id="9802589at2"/>
<dbReference type="Proteomes" id="UP000006904">
    <property type="component" value="Chromosome"/>
</dbReference>
<dbReference type="GO" id="GO:0022625">
    <property type="term" value="C:cytosolic large ribosomal subunit"/>
    <property type="evidence" value="ECO:0007669"/>
    <property type="project" value="TreeGrafter"/>
</dbReference>
<dbReference type="GO" id="GO:0019843">
    <property type="term" value="F:rRNA binding"/>
    <property type="evidence" value="ECO:0007669"/>
    <property type="project" value="UniProtKB-UniRule"/>
</dbReference>
<dbReference type="GO" id="GO:0003735">
    <property type="term" value="F:structural constituent of ribosome"/>
    <property type="evidence" value="ECO:0007669"/>
    <property type="project" value="InterPro"/>
</dbReference>
<dbReference type="GO" id="GO:0000049">
    <property type="term" value="F:tRNA binding"/>
    <property type="evidence" value="ECO:0007669"/>
    <property type="project" value="UniProtKB-KW"/>
</dbReference>
<dbReference type="GO" id="GO:0006412">
    <property type="term" value="P:translation"/>
    <property type="evidence" value="ECO:0007669"/>
    <property type="project" value="UniProtKB-UniRule"/>
</dbReference>
<dbReference type="CDD" id="cd01433">
    <property type="entry name" value="Ribosomal_L16_L10e"/>
    <property type="match status" value="1"/>
</dbReference>
<dbReference type="FunFam" id="3.90.1170.10:FF:000001">
    <property type="entry name" value="50S ribosomal protein L16"/>
    <property type="match status" value="1"/>
</dbReference>
<dbReference type="Gene3D" id="3.90.1170.10">
    <property type="entry name" value="Ribosomal protein L10e/L16"/>
    <property type="match status" value="1"/>
</dbReference>
<dbReference type="HAMAP" id="MF_01342">
    <property type="entry name" value="Ribosomal_uL16"/>
    <property type="match status" value="1"/>
</dbReference>
<dbReference type="InterPro" id="IPR047873">
    <property type="entry name" value="Ribosomal_uL16"/>
</dbReference>
<dbReference type="InterPro" id="IPR000114">
    <property type="entry name" value="Ribosomal_uL16_bact-type"/>
</dbReference>
<dbReference type="InterPro" id="IPR020798">
    <property type="entry name" value="Ribosomal_uL16_CS"/>
</dbReference>
<dbReference type="InterPro" id="IPR016180">
    <property type="entry name" value="Ribosomal_uL16_dom"/>
</dbReference>
<dbReference type="InterPro" id="IPR036920">
    <property type="entry name" value="Ribosomal_uL16_sf"/>
</dbReference>
<dbReference type="NCBIfam" id="TIGR01164">
    <property type="entry name" value="rplP_bact"/>
    <property type="match status" value="1"/>
</dbReference>
<dbReference type="PANTHER" id="PTHR12220">
    <property type="entry name" value="50S/60S RIBOSOMAL PROTEIN L16"/>
    <property type="match status" value="1"/>
</dbReference>
<dbReference type="PANTHER" id="PTHR12220:SF13">
    <property type="entry name" value="LARGE RIBOSOMAL SUBUNIT PROTEIN UL16M"/>
    <property type="match status" value="1"/>
</dbReference>
<dbReference type="Pfam" id="PF00252">
    <property type="entry name" value="Ribosomal_L16"/>
    <property type="match status" value="1"/>
</dbReference>
<dbReference type="PRINTS" id="PR00060">
    <property type="entry name" value="RIBOSOMALL16"/>
</dbReference>
<dbReference type="SUPFAM" id="SSF54686">
    <property type="entry name" value="Ribosomal protein L16p/L10e"/>
    <property type="match status" value="1"/>
</dbReference>
<dbReference type="PROSITE" id="PS00586">
    <property type="entry name" value="RIBOSOMAL_L16_1"/>
    <property type="match status" value="1"/>
</dbReference>
<dbReference type="PROSITE" id="PS00701">
    <property type="entry name" value="RIBOSOMAL_L16_2"/>
    <property type="match status" value="1"/>
</dbReference>
<protein>
    <recommendedName>
        <fullName evidence="1">Large ribosomal subunit protein uL16</fullName>
    </recommendedName>
    <alternativeName>
        <fullName evidence="2">50S ribosomal protein L16</fullName>
    </alternativeName>
</protein>
<proteinExistence type="inferred from homology"/>
<sequence>MLQPKRTKFRKMHKGRNRGLASGTDINFGTFGLQAIDRGRLTARQIESARRAITRCIKRQGKMWIRIFPDKPITQKPLEVRMGKGKGNVEYWVALVQPGKILYELEGVTEEESRAAFKLAAAKLPIKTTFVNKMVM</sequence>
<name>RL16_BUCA5</name>
<gene>
    <name evidence="1" type="primary">rplP</name>
    <name type="ordered locus">BUAP5A_510</name>
</gene>
<comment type="function">
    <text evidence="1">Binds 23S rRNA and is also seen to make contacts with the A and possibly P site tRNAs.</text>
</comment>
<comment type="subunit">
    <text evidence="1">Part of the 50S ribosomal subunit.</text>
</comment>
<comment type="similarity">
    <text evidence="1">Belongs to the universal ribosomal protein uL16 family.</text>
</comment>
<feature type="chain" id="PRO_1000166342" description="Large ribosomal subunit protein uL16">
    <location>
        <begin position="1"/>
        <end position="136"/>
    </location>
</feature>
<keyword id="KW-0687">Ribonucleoprotein</keyword>
<keyword id="KW-0689">Ribosomal protein</keyword>
<keyword id="KW-0694">RNA-binding</keyword>
<keyword id="KW-0699">rRNA-binding</keyword>
<keyword id="KW-0820">tRNA-binding</keyword>
<accession>B8D9U0</accession>